<sequence length="898" mass="102498">MLRTIVTKIFGSRNDRILRRLNKQVRIINKLEAEFELLTDEELKSKTTEFRTRLKNGEKLENLIPEAFATVREASKRILGMRPFDVQLIGGMVLNNRCIAEMRTGEGKTLTATLPCYLNALTGKGVHVVTVNDYLARRDAETNRPLFEFLGMTVGINVPGLSPEEKRAAYAADITYATNSELGFDYLRDNLAHSAQDRFQKHLHYALVDEVDSILIDEARTPLIISGPAEDSSELYMAMDKLIPILIQQDKEDTEEYQGDGDFTLDLKNKQAHLTERGQEKIEQWLMEKGFINENESLYSPARISLLHHIYAALRAHKLFERDVDYIVKNGEIVIVDEHTGRTMAGRRWSDGLHQAIEAKEGVQIQGENQTVASITYQNYFRLYEKLAGMTGTADTEAFEFQQIYGLETIVIPTNKPMIRDDRTDIMFENEKYKFDAIIEDIKDCVARNQPVLVGTISIEKSELLSNALSKAGIKHNVLNAKFHAQEAEIIANAGYPSAVTIATNMAGRGTDIVLGGNWKAEVAKLDNPTEEQIEAIKAAWQIRHETVKQAGGLHIIGTERHESRRIDNQLRGRSGRQGDPGSSRFYLSLDDALMRIYLTEGKLNFMRKMFTEKGEGMESKMLAKVIAQAQAKVEAHNFDGRKNLLEFDDVANDQRHAIYEQRNTLLDNEDIAETIQVIRQDVFNHVIDEYVPPHSLEEQWDIPALETRLKQDFALDLPLSKWLEEDNTFNEDVLRERVLAVAISEYKRKEELVGQEAMRNFEKGVMLQTLDELWKEHLSAMDHLRRGIHLRGYAQKDPKQEYKKESFQMFTDMLDTLKLSVITTLSRVQIRTQDEVEKAEQARQKIAERENAAMQYQNNEGTSSLHEKSEHKIGRNESCPCGSGKKYKHCHGSKAKY</sequence>
<comment type="function">
    <text evidence="1">Part of the Sec protein translocase complex. Interacts with the SecYEG preprotein conducting channel. Has a central role in coupling the hydrolysis of ATP to the transfer of proteins into and across the cell membrane, serving both as a receptor for the preprotein-SecB complex and as an ATP-driven molecular motor driving the stepwise translocation of polypeptide chains across the membrane.</text>
</comment>
<comment type="catalytic activity">
    <reaction evidence="1">
        <text>ATP + H2O + cellular proteinSide 1 = ADP + phosphate + cellular proteinSide 2.</text>
        <dbReference type="EC" id="7.4.2.8"/>
    </reaction>
</comment>
<comment type="cofactor">
    <cofactor evidence="1">
        <name>Zn(2+)</name>
        <dbReference type="ChEBI" id="CHEBI:29105"/>
    </cofactor>
    <text evidence="1">May bind 1 zinc ion per subunit.</text>
</comment>
<comment type="subunit">
    <text evidence="1">Monomer and homodimer. Part of the essential Sec protein translocation apparatus which comprises SecA, SecYEG and auxiliary proteins SecDF-YajC and YidC.</text>
</comment>
<comment type="subcellular location">
    <subcellularLocation>
        <location evidence="1">Cell inner membrane</location>
        <topology evidence="1">Peripheral membrane protein</topology>
        <orientation evidence="1">Cytoplasmic side</orientation>
    </subcellularLocation>
    <subcellularLocation>
        <location evidence="1">Cytoplasm</location>
    </subcellularLocation>
    <text evidence="1">Distribution is 50-50.</text>
</comment>
<comment type="similarity">
    <text evidence="1">Belongs to the SecA family.</text>
</comment>
<protein>
    <recommendedName>
        <fullName evidence="1">Protein translocase subunit SecA</fullName>
        <ecNumber evidence="1">7.4.2.8</ecNumber>
    </recommendedName>
</protein>
<keyword id="KW-0067">ATP-binding</keyword>
<keyword id="KW-0997">Cell inner membrane</keyword>
<keyword id="KW-1003">Cell membrane</keyword>
<keyword id="KW-0963">Cytoplasm</keyword>
<keyword id="KW-0472">Membrane</keyword>
<keyword id="KW-0479">Metal-binding</keyword>
<keyword id="KW-0547">Nucleotide-binding</keyword>
<keyword id="KW-0653">Protein transport</keyword>
<keyword id="KW-1278">Translocase</keyword>
<keyword id="KW-0811">Translocation</keyword>
<keyword id="KW-0813">Transport</keyword>
<keyword id="KW-0862">Zinc</keyword>
<proteinExistence type="inferred from homology"/>
<feature type="chain" id="PRO_1000145019" description="Protein translocase subunit SecA">
    <location>
        <begin position="1"/>
        <end position="898"/>
    </location>
</feature>
<feature type="region of interest" description="Disordered" evidence="2">
    <location>
        <begin position="855"/>
        <end position="898"/>
    </location>
</feature>
<feature type="compositionally biased region" description="Polar residues" evidence="2">
    <location>
        <begin position="855"/>
        <end position="865"/>
    </location>
</feature>
<feature type="compositionally biased region" description="Basic and acidic residues" evidence="2">
    <location>
        <begin position="866"/>
        <end position="876"/>
    </location>
</feature>
<feature type="compositionally biased region" description="Basic residues" evidence="2">
    <location>
        <begin position="886"/>
        <end position="898"/>
    </location>
</feature>
<feature type="binding site" evidence="1">
    <location>
        <position position="87"/>
    </location>
    <ligand>
        <name>ATP</name>
        <dbReference type="ChEBI" id="CHEBI:30616"/>
    </ligand>
</feature>
<feature type="binding site" evidence="1">
    <location>
        <begin position="105"/>
        <end position="109"/>
    </location>
    <ligand>
        <name>ATP</name>
        <dbReference type="ChEBI" id="CHEBI:30616"/>
    </ligand>
</feature>
<feature type="binding site" evidence="1">
    <location>
        <position position="512"/>
    </location>
    <ligand>
        <name>ATP</name>
        <dbReference type="ChEBI" id="CHEBI:30616"/>
    </ligand>
</feature>
<feature type="binding site" evidence="1">
    <location>
        <position position="880"/>
    </location>
    <ligand>
        <name>Zn(2+)</name>
        <dbReference type="ChEBI" id="CHEBI:29105"/>
    </ligand>
</feature>
<feature type="binding site" evidence="1">
    <location>
        <position position="882"/>
    </location>
    <ligand>
        <name>Zn(2+)</name>
        <dbReference type="ChEBI" id="CHEBI:29105"/>
    </ligand>
</feature>
<feature type="binding site" evidence="1">
    <location>
        <position position="891"/>
    </location>
    <ligand>
        <name>Zn(2+)</name>
        <dbReference type="ChEBI" id="CHEBI:29105"/>
    </ligand>
</feature>
<feature type="binding site" evidence="1">
    <location>
        <position position="892"/>
    </location>
    <ligand>
        <name>Zn(2+)</name>
        <dbReference type="ChEBI" id="CHEBI:29105"/>
    </ligand>
</feature>
<gene>
    <name evidence="1" type="primary">secA</name>
    <name type="ordered locus">HSM_1468</name>
</gene>
<name>SECA_HISS2</name>
<dbReference type="EC" id="7.4.2.8" evidence="1"/>
<dbReference type="EMBL" id="CP000947">
    <property type="protein sequence ID" value="ACA31216.1"/>
    <property type="molecule type" value="Genomic_DNA"/>
</dbReference>
<dbReference type="RefSeq" id="WP_012340609.1">
    <property type="nucleotide sequence ID" value="NC_010519.1"/>
</dbReference>
<dbReference type="SMR" id="B0UUI9"/>
<dbReference type="STRING" id="228400.HSM_1468"/>
<dbReference type="GeneID" id="31487766"/>
<dbReference type="KEGG" id="hsm:HSM_1468"/>
<dbReference type="HOGENOM" id="CLU_005314_3_0_6"/>
<dbReference type="GO" id="GO:0031522">
    <property type="term" value="C:cell envelope Sec protein transport complex"/>
    <property type="evidence" value="ECO:0007669"/>
    <property type="project" value="TreeGrafter"/>
</dbReference>
<dbReference type="GO" id="GO:0005829">
    <property type="term" value="C:cytosol"/>
    <property type="evidence" value="ECO:0007669"/>
    <property type="project" value="TreeGrafter"/>
</dbReference>
<dbReference type="GO" id="GO:0005886">
    <property type="term" value="C:plasma membrane"/>
    <property type="evidence" value="ECO:0007669"/>
    <property type="project" value="UniProtKB-SubCell"/>
</dbReference>
<dbReference type="GO" id="GO:0005524">
    <property type="term" value="F:ATP binding"/>
    <property type="evidence" value="ECO:0007669"/>
    <property type="project" value="UniProtKB-UniRule"/>
</dbReference>
<dbReference type="GO" id="GO:0046872">
    <property type="term" value="F:metal ion binding"/>
    <property type="evidence" value="ECO:0007669"/>
    <property type="project" value="UniProtKB-KW"/>
</dbReference>
<dbReference type="GO" id="GO:0008564">
    <property type="term" value="F:protein-exporting ATPase activity"/>
    <property type="evidence" value="ECO:0007669"/>
    <property type="project" value="UniProtKB-EC"/>
</dbReference>
<dbReference type="GO" id="GO:0065002">
    <property type="term" value="P:intracellular protein transmembrane transport"/>
    <property type="evidence" value="ECO:0007669"/>
    <property type="project" value="UniProtKB-UniRule"/>
</dbReference>
<dbReference type="GO" id="GO:0017038">
    <property type="term" value="P:protein import"/>
    <property type="evidence" value="ECO:0007669"/>
    <property type="project" value="InterPro"/>
</dbReference>
<dbReference type="GO" id="GO:0006605">
    <property type="term" value="P:protein targeting"/>
    <property type="evidence" value="ECO:0007669"/>
    <property type="project" value="UniProtKB-UniRule"/>
</dbReference>
<dbReference type="GO" id="GO:0043952">
    <property type="term" value="P:protein transport by the Sec complex"/>
    <property type="evidence" value="ECO:0007669"/>
    <property type="project" value="TreeGrafter"/>
</dbReference>
<dbReference type="CDD" id="cd17928">
    <property type="entry name" value="DEXDc_SecA"/>
    <property type="match status" value="1"/>
</dbReference>
<dbReference type="CDD" id="cd18803">
    <property type="entry name" value="SF2_C_secA"/>
    <property type="match status" value="1"/>
</dbReference>
<dbReference type="FunFam" id="3.40.50.300:FF:000113">
    <property type="entry name" value="Preprotein translocase subunit SecA"/>
    <property type="match status" value="1"/>
</dbReference>
<dbReference type="FunFam" id="3.90.1440.10:FF:000001">
    <property type="entry name" value="Preprotein translocase subunit SecA"/>
    <property type="match status" value="1"/>
</dbReference>
<dbReference type="FunFam" id="1.10.3060.10:FF:000003">
    <property type="entry name" value="Protein translocase subunit SecA"/>
    <property type="match status" value="1"/>
</dbReference>
<dbReference type="Gene3D" id="1.10.3060.10">
    <property type="entry name" value="Helical scaffold and wing domains of SecA"/>
    <property type="match status" value="1"/>
</dbReference>
<dbReference type="Gene3D" id="3.40.50.300">
    <property type="entry name" value="P-loop containing nucleotide triphosphate hydrolases"/>
    <property type="match status" value="2"/>
</dbReference>
<dbReference type="Gene3D" id="3.90.1440.10">
    <property type="entry name" value="SecA, preprotein cross-linking domain"/>
    <property type="match status" value="1"/>
</dbReference>
<dbReference type="HAMAP" id="MF_01382">
    <property type="entry name" value="SecA"/>
    <property type="match status" value="1"/>
</dbReference>
<dbReference type="InterPro" id="IPR014001">
    <property type="entry name" value="Helicase_ATP-bd"/>
</dbReference>
<dbReference type="InterPro" id="IPR001650">
    <property type="entry name" value="Helicase_C-like"/>
</dbReference>
<dbReference type="InterPro" id="IPR027417">
    <property type="entry name" value="P-loop_NTPase"/>
</dbReference>
<dbReference type="InterPro" id="IPR004027">
    <property type="entry name" value="SEC_C_motif"/>
</dbReference>
<dbReference type="InterPro" id="IPR000185">
    <property type="entry name" value="SecA"/>
</dbReference>
<dbReference type="InterPro" id="IPR020937">
    <property type="entry name" value="SecA_CS"/>
</dbReference>
<dbReference type="InterPro" id="IPR011115">
    <property type="entry name" value="SecA_DEAD"/>
</dbReference>
<dbReference type="InterPro" id="IPR014018">
    <property type="entry name" value="SecA_motor_DEAD"/>
</dbReference>
<dbReference type="InterPro" id="IPR011130">
    <property type="entry name" value="SecA_preprotein_X-link_dom"/>
</dbReference>
<dbReference type="InterPro" id="IPR044722">
    <property type="entry name" value="SecA_SF2_C"/>
</dbReference>
<dbReference type="InterPro" id="IPR011116">
    <property type="entry name" value="SecA_Wing/Scaffold"/>
</dbReference>
<dbReference type="InterPro" id="IPR036266">
    <property type="entry name" value="SecA_Wing/Scaffold_sf"/>
</dbReference>
<dbReference type="InterPro" id="IPR036670">
    <property type="entry name" value="SecA_X-link_sf"/>
</dbReference>
<dbReference type="NCBIfam" id="NF009538">
    <property type="entry name" value="PRK12904.1"/>
    <property type="match status" value="1"/>
</dbReference>
<dbReference type="NCBIfam" id="TIGR00963">
    <property type="entry name" value="secA"/>
    <property type="match status" value="1"/>
</dbReference>
<dbReference type="PANTHER" id="PTHR30612:SF0">
    <property type="entry name" value="CHLOROPLAST PROTEIN-TRANSPORTING ATPASE"/>
    <property type="match status" value="1"/>
</dbReference>
<dbReference type="PANTHER" id="PTHR30612">
    <property type="entry name" value="SECA INNER MEMBRANE COMPONENT OF SEC PROTEIN SECRETION SYSTEM"/>
    <property type="match status" value="1"/>
</dbReference>
<dbReference type="Pfam" id="PF21090">
    <property type="entry name" value="P-loop_SecA"/>
    <property type="match status" value="1"/>
</dbReference>
<dbReference type="Pfam" id="PF02810">
    <property type="entry name" value="SEC-C"/>
    <property type="match status" value="1"/>
</dbReference>
<dbReference type="Pfam" id="PF07517">
    <property type="entry name" value="SecA_DEAD"/>
    <property type="match status" value="1"/>
</dbReference>
<dbReference type="Pfam" id="PF01043">
    <property type="entry name" value="SecA_PP_bind"/>
    <property type="match status" value="1"/>
</dbReference>
<dbReference type="Pfam" id="PF07516">
    <property type="entry name" value="SecA_SW"/>
    <property type="match status" value="1"/>
</dbReference>
<dbReference type="PRINTS" id="PR00906">
    <property type="entry name" value="SECA"/>
</dbReference>
<dbReference type="SMART" id="SM00957">
    <property type="entry name" value="SecA_DEAD"/>
    <property type="match status" value="1"/>
</dbReference>
<dbReference type="SMART" id="SM00958">
    <property type="entry name" value="SecA_PP_bind"/>
    <property type="match status" value="1"/>
</dbReference>
<dbReference type="SUPFAM" id="SSF81886">
    <property type="entry name" value="Helical scaffold and wing domains of SecA"/>
    <property type="match status" value="1"/>
</dbReference>
<dbReference type="SUPFAM" id="SSF52540">
    <property type="entry name" value="P-loop containing nucleoside triphosphate hydrolases"/>
    <property type="match status" value="2"/>
</dbReference>
<dbReference type="SUPFAM" id="SSF81767">
    <property type="entry name" value="Pre-protein crosslinking domain of SecA"/>
    <property type="match status" value="1"/>
</dbReference>
<dbReference type="PROSITE" id="PS01312">
    <property type="entry name" value="SECA"/>
    <property type="match status" value="1"/>
</dbReference>
<dbReference type="PROSITE" id="PS51196">
    <property type="entry name" value="SECA_MOTOR_DEAD"/>
    <property type="match status" value="1"/>
</dbReference>
<evidence type="ECO:0000255" key="1">
    <source>
        <dbReference type="HAMAP-Rule" id="MF_01382"/>
    </source>
</evidence>
<evidence type="ECO:0000256" key="2">
    <source>
        <dbReference type="SAM" id="MobiDB-lite"/>
    </source>
</evidence>
<reference key="1">
    <citation type="submission" date="2008-02" db="EMBL/GenBank/DDBJ databases">
        <title>Complete sequence of Haemophilus somnus 2336.</title>
        <authorList>
            <consortium name="US DOE Joint Genome Institute"/>
            <person name="Siddaramappa S."/>
            <person name="Duncan A.J."/>
            <person name="Challacombe J.F."/>
            <person name="Rainey D."/>
            <person name="Gillaspy A.F."/>
            <person name="Carson M."/>
            <person name="Gipson J."/>
            <person name="Gipson M."/>
            <person name="Bruce D."/>
            <person name="Detter J.C."/>
            <person name="Han C.S."/>
            <person name="Land M."/>
            <person name="Tapia R."/>
            <person name="Thompson L.S."/>
            <person name="Orvis J."/>
            <person name="Zaitshik J."/>
            <person name="Barnes G."/>
            <person name="Brettin T.S."/>
            <person name="Dyer D.W."/>
            <person name="Inzana T.J."/>
        </authorList>
    </citation>
    <scope>NUCLEOTIDE SEQUENCE [LARGE SCALE GENOMIC DNA]</scope>
    <source>
        <strain>2336</strain>
    </source>
</reference>
<accession>B0UUI9</accession>
<organism>
    <name type="scientific">Histophilus somni (strain 2336)</name>
    <name type="common">Haemophilus somnus</name>
    <dbReference type="NCBI Taxonomy" id="228400"/>
    <lineage>
        <taxon>Bacteria</taxon>
        <taxon>Pseudomonadati</taxon>
        <taxon>Pseudomonadota</taxon>
        <taxon>Gammaproteobacteria</taxon>
        <taxon>Pasteurellales</taxon>
        <taxon>Pasteurellaceae</taxon>
        <taxon>Histophilus</taxon>
    </lineage>
</organism>